<dbReference type="EMBL" id="AY013712">
    <property type="protein sequence ID" value="AAG37434.1"/>
    <property type="molecule type" value="mRNA"/>
</dbReference>
<dbReference type="EMBL" id="AF323757">
    <property type="protein sequence ID" value="AAK73366.1"/>
    <property type="molecule type" value="mRNA"/>
</dbReference>
<dbReference type="SMR" id="Q95N18"/>
<dbReference type="GlyCosmos" id="Q95N18">
    <property type="glycosylation" value="4 sites, No reported glycans"/>
</dbReference>
<dbReference type="Proteomes" id="UP000694425">
    <property type="component" value="Unplaced"/>
</dbReference>
<dbReference type="GO" id="GO:0005737">
    <property type="term" value="C:cytoplasm"/>
    <property type="evidence" value="ECO:0000250"/>
    <property type="project" value="UniProtKB"/>
</dbReference>
<dbReference type="GO" id="GO:0005856">
    <property type="term" value="C:cytoskeleton"/>
    <property type="evidence" value="ECO:0007669"/>
    <property type="project" value="UniProtKB-SubCell"/>
</dbReference>
<dbReference type="GO" id="GO:0005576">
    <property type="term" value="C:extracellular region"/>
    <property type="evidence" value="ECO:0007669"/>
    <property type="project" value="UniProtKB-SubCell"/>
</dbReference>
<dbReference type="GO" id="GO:0030175">
    <property type="term" value="C:filopodium"/>
    <property type="evidence" value="ECO:0000250"/>
    <property type="project" value="UniProtKB"/>
</dbReference>
<dbReference type="GO" id="GO:0030027">
    <property type="term" value="C:lamellipodium"/>
    <property type="evidence" value="ECO:0000250"/>
    <property type="project" value="UniProtKB"/>
</dbReference>
<dbReference type="GO" id="GO:0005886">
    <property type="term" value="C:plasma membrane"/>
    <property type="evidence" value="ECO:0000250"/>
    <property type="project" value="UniProtKB"/>
</dbReference>
<dbReference type="GO" id="GO:0005125">
    <property type="term" value="F:cytokine activity"/>
    <property type="evidence" value="ECO:0007669"/>
    <property type="project" value="TreeGrafter"/>
</dbReference>
<dbReference type="GO" id="GO:0008083">
    <property type="term" value="F:growth factor activity"/>
    <property type="evidence" value="ECO:0007669"/>
    <property type="project" value="UniProtKB-KW"/>
</dbReference>
<dbReference type="GO" id="GO:0005173">
    <property type="term" value="F:stem cell factor receptor binding"/>
    <property type="evidence" value="ECO:0007669"/>
    <property type="project" value="InterPro"/>
</dbReference>
<dbReference type="GO" id="GO:0007155">
    <property type="term" value="P:cell adhesion"/>
    <property type="evidence" value="ECO:0007669"/>
    <property type="project" value="UniProtKB-KW"/>
</dbReference>
<dbReference type="GO" id="GO:0008284">
    <property type="term" value="P:positive regulation of cell population proliferation"/>
    <property type="evidence" value="ECO:0007669"/>
    <property type="project" value="TreeGrafter"/>
</dbReference>
<dbReference type="FunFam" id="1.20.1250.10:FF:000004">
    <property type="entry name" value="Kit ligand"/>
    <property type="match status" value="1"/>
</dbReference>
<dbReference type="Gene3D" id="1.20.1250.10">
    <property type="match status" value="1"/>
</dbReference>
<dbReference type="InterPro" id="IPR009079">
    <property type="entry name" value="4_helix_cytokine-like_core"/>
</dbReference>
<dbReference type="InterPro" id="IPR003452">
    <property type="entry name" value="SCF"/>
</dbReference>
<dbReference type="PANTHER" id="PTHR11574">
    <property type="entry name" value="KIT LIGAND"/>
    <property type="match status" value="1"/>
</dbReference>
<dbReference type="PANTHER" id="PTHR11574:SF0">
    <property type="entry name" value="KIT LIGAND"/>
    <property type="match status" value="1"/>
</dbReference>
<dbReference type="Pfam" id="PF02404">
    <property type="entry name" value="SCF"/>
    <property type="match status" value="1"/>
</dbReference>
<dbReference type="PIRSF" id="PIRSF015599">
    <property type="entry name" value="SCF"/>
    <property type="match status" value="1"/>
</dbReference>
<dbReference type="SUPFAM" id="SSF47266">
    <property type="entry name" value="4-helical cytokines"/>
    <property type="match status" value="1"/>
</dbReference>
<organism>
    <name type="scientific">Neovison vison</name>
    <name type="common">American mink</name>
    <name type="synonym">Mustela vison</name>
    <dbReference type="NCBI Taxonomy" id="452646"/>
    <lineage>
        <taxon>Eukaryota</taxon>
        <taxon>Metazoa</taxon>
        <taxon>Chordata</taxon>
        <taxon>Craniata</taxon>
        <taxon>Vertebrata</taxon>
        <taxon>Euteleostomi</taxon>
        <taxon>Mammalia</taxon>
        <taxon>Eutheria</taxon>
        <taxon>Laurasiatheria</taxon>
        <taxon>Carnivora</taxon>
        <taxon>Caniformia</taxon>
        <taxon>Musteloidea</taxon>
        <taxon>Mustelidae</taxon>
        <taxon>Mustelinae</taxon>
        <taxon>Neogale</taxon>
    </lineage>
</organism>
<sequence length="274" mass="31035">MKKTQTWIITCIYLQLLLFNPLVRTKGICRNRVTDDVKDVTKLVANLPKDYKIALNYVPGMDVLSSHCWIRVMVEQLSVSLTDLLDKFSNISEGLSNYSIIDKLVKIVDDLVECMEEHSSENVKKSPKNPEPRHFAPEDFFRIFNRSIDALKDLETVASKTSECVLPSTLSPEKDSRVSVTKPFMLPPVAASSLRNDSSSSNRKAANPLGDSNLQWAAMALPAFFSLVIGFAFGALYWKKKQPNLTRTAENIQINEEDNEISMLQEKEREFQEV</sequence>
<keyword id="KW-0025">Alternative splicing</keyword>
<keyword id="KW-0130">Cell adhesion</keyword>
<keyword id="KW-1003">Cell membrane</keyword>
<keyword id="KW-0966">Cell projection</keyword>
<keyword id="KW-0963">Cytoplasm</keyword>
<keyword id="KW-0206">Cytoskeleton</keyword>
<keyword id="KW-1015">Disulfide bond</keyword>
<keyword id="KW-0325">Glycoprotein</keyword>
<keyword id="KW-0339">Growth factor</keyword>
<keyword id="KW-0472">Membrane</keyword>
<keyword id="KW-1185">Reference proteome</keyword>
<keyword id="KW-0964">Secreted</keyword>
<keyword id="KW-0732">Signal</keyword>
<keyword id="KW-0812">Transmembrane</keyword>
<keyword id="KW-1133">Transmembrane helix</keyword>
<proteinExistence type="evidence at transcript level"/>
<feature type="signal peptide" evidence="1">
    <location>
        <begin position="1"/>
        <end position="25"/>
    </location>
</feature>
<feature type="chain" id="PRO_0000031915" description="Kit ligand">
    <location>
        <begin position="26"/>
        <end position="274"/>
    </location>
</feature>
<feature type="chain" id="PRO_0000292276" description="Soluble KIT ligand">
    <location>
        <begin position="26"/>
        <end position="191"/>
    </location>
</feature>
<feature type="topological domain" description="Extracellular" evidence="3">
    <location>
        <begin position="26"/>
        <end position="215"/>
    </location>
</feature>
<feature type="transmembrane region" description="Helical" evidence="3">
    <location>
        <begin position="216"/>
        <end position="238"/>
    </location>
</feature>
<feature type="topological domain" description="Cytoplasmic" evidence="3">
    <location>
        <begin position="239"/>
        <end position="274"/>
    </location>
</feature>
<feature type="glycosylation site" description="N-linked (GlcNAc...) asparagine" evidence="3">
    <location>
        <position position="90"/>
    </location>
</feature>
<feature type="glycosylation site" description="N-linked (GlcNAc...) asparagine" evidence="3">
    <location>
        <position position="97"/>
    </location>
</feature>
<feature type="glycosylation site" description="N-linked (GlcNAc...) asparagine" evidence="3">
    <location>
        <position position="145"/>
    </location>
</feature>
<feature type="glycosylation site" description="N-linked (GlcNAc...) asparagine" evidence="3">
    <location>
        <position position="196"/>
    </location>
</feature>
<feature type="disulfide bond" evidence="1">
    <location>
        <begin position="29"/>
        <end position="114"/>
    </location>
</feature>
<feature type="disulfide bond" evidence="1">
    <location>
        <begin position="68"/>
        <end position="164"/>
    </location>
</feature>
<feature type="splice variant" id="VSP_006024" description="In isoform 2." evidence="4">
    <original>DSRVSVTKPFMLPPVAASSLRNDSSSSNR</original>
    <variation>G</variation>
    <location>
        <begin position="175"/>
        <end position="203"/>
    </location>
</feature>
<feature type="sequence conflict" description="In Ref. 1; AAK73366." evidence="5" ref="1">
    <original>S</original>
    <variation>P</variation>
    <location>
        <position position="65"/>
    </location>
</feature>
<feature type="sequence conflict" description="In Ref. 1; AAK73366." evidence="5" ref="1">
    <original>S</original>
    <variation>N</variation>
    <location>
        <position position="171"/>
    </location>
</feature>
<feature type="sequence conflict" description="In Ref. 1; AAK73366." evidence="5" ref="1">
    <original>EREFQEV</original>
    <variation>RESFKRCNCGFYHTVLSYLGG</variation>
    <location>
        <begin position="268"/>
        <end position="274"/>
    </location>
</feature>
<accession>Q95N18</accession>
<accession>Q95MN5</accession>
<comment type="function">
    <text evidence="1">Ligand for the receptor-type protein-tyrosine kinase KIT. Plays an essential role in the regulation of cell survival and proliferation, hematopoiesis, stem cell maintenance, gametogenesis, mast cell development, migration and function, and in melanogenesis. KITLG/SCF binding can activate several signaling pathways. Promotes phosphorylation of PIK3R1, the regulatory subunit of phosphatidylinositol 3-kinase, and subsequent activation of the kinase AKT1. KITLG/SCF and KIT also transmit signals via GRB2 and activation of RAS, RAF1 and the MAP kinases MAPK1/ERK2 and/or MAPK3/ERK1. KITLG/SCF and KIT promote activation of STAT family members STAT1, STAT3 and STAT5. KITLG/SCF and KIT promote activation of PLCG1, leading to the production of the cellular signaling molecules diacylglycerol and inositol 1,4,5-trisphosphate. KITLG/SCF acts synergistically with other cytokines, probably interleukins (By similarity).</text>
</comment>
<comment type="subunit">
    <text evidence="1 5">Homodimer, non-covalently linked (Probable). Heterotetramer with KIT, binding two KIT molecules; thereby mediates KIT dimerization and subsequent activation by autophosphorylation (By similarity).</text>
</comment>
<comment type="subcellular location">
    <subcellularLocation>
        <location evidence="2">Cytoplasm</location>
    </subcellularLocation>
    <subcellularLocation>
        <location evidence="1">Cytoplasm</location>
        <location evidence="1">Cytoskeleton</location>
    </subcellularLocation>
    <subcellularLocation>
        <location evidence="2">Cell membrane</location>
        <topology evidence="1">Single-pass type I membrane protein</topology>
    </subcellularLocation>
    <subcellularLocation>
        <location evidence="2">Cell projection</location>
        <location evidence="2">Lamellipodium</location>
    </subcellularLocation>
    <subcellularLocation>
        <location evidence="2">Cell projection</location>
        <location evidence="2">Filopodium</location>
    </subcellularLocation>
</comment>
<comment type="subcellular location">
    <molecule>Soluble KIT ligand</molecule>
    <subcellularLocation>
        <location evidence="1">Secreted</location>
    </subcellularLocation>
</comment>
<comment type="alternative products">
    <event type="alternative splicing"/>
    <isoform>
        <id>Q95N18-1</id>
        <name>1</name>
        <sequence type="displayed"/>
    </isoform>
    <isoform>
        <id>Q95N18-2</id>
        <name>2</name>
        <sequence type="described" ref="VSP_006024"/>
    </isoform>
</comment>
<comment type="PTM">
    <text evidence="1">A soluble form is produced by proteolytic processing of isoform 1 in the extracellular domain.</text>
</comment>
<comment type="similarity">
    <text evidence="5">Belongs to the SCF family.</text>
</comment>
<protein>
    <recommendedName>
        <fullName>Kit ligand</fullName>
    </recommendedName>
    <alternativeName>
        <fullName>Mast cell growth factor</fullName>
        <shortName>MGF</shortName>
    </alternativeName>
    <alternativeName>
        <fullName>Stem cell factor</fullName>
        <shortName>SCF</shortName>
    </alternativeName>
    <alternativeName>
        <fullName>c-Kit ligand</fullName>
    </alternativeName>
    <component>
        <recommendedName>
            <fullName>Soluble KIT ligand</fullName>
            <shortName>sKITLG</shortName>
        </recommendedName>
    </component>
</protein>
<evidence type="ECO:0000250" key="1"/>
<evidence type="ECO:0000250" key="2">
    <source>
        <dbReference type="UniProtKB" id="P21583"/>
    </source>
</evidence>
<evidence type="ECO:0000255" key="3"/>
<evidence type="ECO:0000303" key="4">
    <source ref="1"/>
</evidence>
<evidence type="ECO:0000305" key="5"/>
<gene>
    <name type="primary">KITLG</name>
    <name type="synonym">SCF</name>
</gene>
<name>SCF_NEOVI</name>
<reference key="1">
    <citation type="submission" date="2000-11" db="EMBL/GenBank/DDBJ databases">
        <authorList>
            <person name="Bennett R.D."/>
            <person name="Murphy B.D."/>
        </authorList>
    </citation>
    <scope>NUCLEOTIDE SEQUENCE [MRNA] (ISOFORMS 1 AND 2)</scope>
</reference>